<accession>Q5JE34</accession>
<sequence>MVAEKTIKSMVSKAELPDNIKEELYAKLIEYNEKYKLKKDEIQAIIDETVREYQKALIEPGEAVGTVAAQSIGEPSTQMTLNTFHYAGVAEINVTLGLPRIIEIVDARKNPSTPIMTVYLDEEHRYDRDKALEVARRIEGTTLENLAREETIDILNMEYVVEIDPERLEKAGLDMEKVVRKLTGSFKSAEFEAEGYTLVVRPKKVTKLSDLRKIAEKVKKHRLKGLSGVGKTIIRKEGDEYVIYTEGSNFKQVLKVPGVDPTRTRTNNIWEIAEVLGIEAARNAIIDEIVSTMREQGLEVDVRHIMLVADMMTLDGVIRPIGRHGIVGEKASVLARAAFEITTQHLFAAAERGEVDPLNGVVENVLIGQPVPVGTGIVKLAMSLPLRPKRE</sequence>
<reference key="1">
    <citation type="journal article" date="2005" name="Genome Res.">
        <title>Complete genome sequence of the hyperthermophilic archaeon Thermococcus kodakaraensis KOD1 and comparison with Pyrococcus genomes.</title>
        <authorList>
            <person name="Fukui T."/>
            <person name="Atomi H."/>
            <person name="Kanai T."/>
            <person name="Matsumi R."/>
            <person name="Fujiwara S."/>
            <person name="Imanaka T."/>
        </authorList>
    </citation>
    <scope>NUCLEOTIDE SEQUENCE [LARGE SCALE GENOMIC DNA]</scope>
    <source>
        <strain>ATCC BAA-918 / JCM 12380 / KOD1</strain>
    </source>
</reference>
<reference key="2">
    <citation type="journal article" date="2011" name="Mol. Biol. Cell">
        <title>Histone and TK0471/TrmBL2 form a novel heterogeneous genome architecture in the hyperthermophilic archaeon Thermococcus kodakarensis.</title>
        <authorList>
            <person name="Maruyama H."/>
            <person name="Shin M."/>
            <person name="Oda T."/>
            <person name="Matsumi R."/>
            <person name="Ohniwa R.L."/>
            <person name="Itoh T."/>
            <person name="Shirahige K."/>
            <person name="Imanaka T."/>
            <person name="Atomi H."/>
            <person name="Yoshimura S.H."/>
            <person name="Takeyasu K."/>
        </authorList>
    </citation>
    <scope>IDENTIFICATION BY MASS SPECTROMETRY</scope>
    <scope>SUBCELLULAR LOCATION</scope>
    <source>
        <strain>ATCC BAA-918 / JCM 12380 / KOD1</strain>
    </source>
</reference>
<gene>
    <name evidence="1" type="primary">rpo1C</name>
    <name evidence="1" type="synonym">rpoA2</name>
    <name type="ordered locus">TK1081</name>
</gene>
<organism>
    <name type="scientific">Thermococcus kodakarensis (strain ATCC BAA-918 / JCM 12380 / KOD1)</name>
    <name type="common">Pyrococcus kodakaraensis (strain KOD1)</name>
    <dbReference type="NCBI Taxonomy" id="69014"/>
    <lineage>
        <taxon>Archaea</taxon>
        <taxon>Methanobacteriati</taxon>
        <taxon>Methanobacteriota</taxon>
        <taxon>Thermococci</taxon>
        <taxon>Thermococcales</taxon>
        <taxon>Thermococcaceae</taxon>
        <taxon>Thermococcus</taxon>
    </lineage>
</organism>
<comment type="function">
    <text evidence="1">DNA-dependent RNA polymerase (RNAP) catalyzes the transcription of DNA into RNA using the four ribonucleoside triphosphates as substrates. Forms part of the jaw domain.</text>
</comment>
<comment type="catalytic activity">
    <reaction evidence="1">
        <text>RNA(n) + a ribonucleoside 5'-triphosphate = RNA(n+1) + diphosphate</text>
        <dbReference type="Rhea" id="RHEA:21248"/>
        <dbReference type="Rhea" id="RHEA-COMP:14527"/>
        <dbReference type="Rhea" id="RHEA-COMP:17342"/>
        <dbReference type="ChEBI" id="CHEBI:33019"/>
        <dbReference type="ChEBI" id="CHEBI:61557"/>
        <dbReference type="ChEBI" id="CHEBI:140395"/>
        <dbReference type="EC" id="2.7.7.6"/>
    </reaction>
</comment>
<comment type="subunit">
    <text evidence="1">Part of the RNA polymerase complex.</text>
</comment>
<comment type="subcellular location">
    <subcellularLocation>
        <location evidence="1 3">Cytoplasm</location>
    </subcellularLocation>
    <subcellularLocation>
        <location evidence="2">Chromosome</location>
    </subcellularLocation>
</comment>
<comment type="similarity">
    <text evidence="1">Belongs to the RNA polymerase beta' chain family.</text>
</comment>
<feature type="chain" id="PRO_0000074024" description="DNA-directed RNA polymerase subunit Rpo1C">
    <location>
        <begin position="1"/>
        <end position="391"/>
    </location>
</feature>
<feature type="helix" evidence="6">
    <location>
        <begin position="4"/>
        <end position="13"/>
    </location>
</feature>
<feature type="turn" evidence="4">
    <location>
        <begin position="15"/>
        <end position="17"/>
    </location>
</feature>
<feature type="helix" evidence="6">
    <location>
        <begin position="18"/>
        <end position="35"/>
    </location>
</feature>
<feature type="helix" evidence="6">
    <location>
        <begin position="39"/>
        <end position="56"/>
    </location>
</feature>
<feature type="helix" evidence="6">
    <location>
        <begin position="64"/>
        <end position="76"/>
    </location>
</feature>
<feature type="helix" evidence="6">
    <location>
        <begin position="98"/>
        <end position="105"/>
    </location>
</feature>
<feature type="strand" evidence="6">
    <location>
        <begin position="115"/>
        <end position="119"/>
    </location>
</feature>
<feature type="turn" evidence="6">
    <location>
        <begin position="122"/>
        <end position="124"/>
    </location>
</feature>
<feature type="helix" evidence="6">
    <location>
        <begin position="128"/>
        <end position="138"/>
    </location>
</feature>
<feature type="helix" evidence="6">
    <location>
        <begin position="143"/>
        <end position="146"/>
    </location>
</feature>
<feature type="strand" evidence="5">
    <location>
        <begin position="147"/>
        <end position="149"/>
    </location>
</feature>
<feature type="strand" evidence="6">
    <location>
        <begin position="151"/>
        <end position="153"/>
    </location>
</feature>
<feature type="turn" evidence="6">
    <location>
        <begin position="154"/>
        <end position="157"/>
    </location>
</feature>
<feature type="strand" evidence="6">
    <location>
        <begin position="158"/>
        <end position="163"/>
    </location>
</feature>
<feature type="helix" evidence="6">
    <location>
        <begin position="165"/>
        <end position="171"/>
    </location>
</feature>
<feature type="helix" evidence="6">
    <location>
        <begin position="175"/>
        <end position="185"/>
    </location>
</feature>
<feature type="strand" evidence="6">
    <location>
        <begin position="188"/>
        <end position="194"/>
    </location>
</feature>
<feature type="strand" evidence="6">
    <location>
        <begin position="197"/>
        <end position="201"/>
    </location>
</feature>
<feature type="helix" evidence="6">
    <location>
        <begin position="209"/>
        <end position="219"/>
    </location>
</feature>
<feature type="strand" evidence="6">
    <location>
        <begin position="221"/>
        <end position="225"/>
    </location>
</feature>
<feature type="strand" evidence="6">
    <location>
        <begin position="231"/>
        <end position="237"/>
    </location>
</feature>
<feature type="strand" evidence="6">
    <location>
        <begin position="240"/>
        <end position="247"/>
    </location>
</feature>
<feature type="helix" evidence="6">
    <location>
        <begin position="250"/>
        <end position="254"/>
    </location>
</feature>
<feature type="strand" evidence="6">
    <location>
        <begin position="260"/>
        <end position="267"/>
    </location>
</feature>
<feature type="helix" evidence="6">
    <location>
        <begin position="269"/>
        <end position="275"/>
    </location>
</feature>
<feature type="helix" evidence="6">
    <location>
        <begin position="278"/>
        <end position="296"/>
    </location>
</feature>
<feature type="helix" evidence="6">
    <location>
        <begin position="302"/>
        <end position="312"/>
    </location>
</feature>
<feature type="turn" evidence="6">
    <location>
        <begin position="313"/>
        <end position="315"/>
    </location>
</feature>
<feature type="turn" evidence="6">
    <location>
        <begin position="323"/>
        <end position="329"/>
    </location>
</feature>
<feature type="helix" evidence="6">
    <location>
        <begin position="333"/>
        <end position="339"/>
    </location>
</feature>
<feature type="helix" evidence="6">
    <location>
        <begin position="343"/>
        <end position="352"/>
    </location>
</feature>
<feature type="helix" evidence="6">
    <location>
        <begin position="362"/>
        <end position="367"/>
    </location>
</feature>
<feature type="helix" evidence="6">
    <location>
        <begin position="374"/>
        <end position="377"/>
    </location>
</feature>
<feature type="strand" evidence="6">
    <location>
        <begin position="379"/>
        <end position="382"/>
    </location>
</feature>
<proteinExistence type="evidence at protein level"/>
<name>RPO1C_THEKO</name>
<keyword id="KW-0002">3D-structure</keyword>
<keyword id="KW-0158">Chromosome</keyword>
<keyword id="KW-0963">Cytoplasm</keyword>
<keyword id="KW-0238">DNA-binding</keyword>
<keyword id="KW-0240">DNA-directed RNA polymerase</keyword>
<keyword id="KW-0548">Nucleotidyltransferase</keyword>
<keyword id="KW-1185">Reference proteome</keyword>
<keyword id="KW-0804">Transcription</keyword>
<keyword id="KW-0808">Transferase</keyword>
<evidence type="ECO:0000255" key="1">
    <source>
        <dbReference type="HAMAP-Rule" id="MF_00411"/>
    </source>
</evidence>
<evidence type="ECO:0000269" key="2">
    <source>
    </source>
</evidence>
<evidence type="ECO:0000305" key="3">
    <source>
    </source>
</evidence>
<evidence type="ECO:0007829" key="4">
    <source>
        <dbReference type="PDB" id="4QIW"/>
    </source>
</evidence>
<evidence type="ECO:0007829" key="5">
    <source>
        <dbReference type="PDB" id="9BCT"/>
    </source>
</evidence>
<evidence type="ECO:0007829" key="6">
    <source>
        <dbReference type="PDB" id="9BCU"/>
    </source>
</evidence>
<protein>
    <recommendedName>
        <fullName evidence="1">DNA-directed RNA polymerase subunit Rpo1C</fullName>
        <ecNumber evidence="1">2.7.7.6</ecNumber>
    </recommendedName>
    <alternativeName>
        <fullName evidence="1">DNA-directed RNA polymerase subunit A''</fullName>
    </alternativeName>
</protein>
<dbReference type="EC" id="2.7.7.6" evidence="1"/>
<dbReference type="EMBL" id="AP006878">
    <property type="protein sequence ID" value="BAD85270.1"/>
    <property type="molecule type" value="Genomic_DNA"/>
</dbReference>
<dbReference type="RefSeq" id="WP_011250032.1">
    <property type="nucleotide sequence ID" value="NC_006624.1"/>
</dbReference>
<dbReference type="PDB" id="4QIW">
    <property type="method" value="X-ray"/>
    <property type="resolution" value="3.50 A"/>
    <property type="chains" value="C/M=1-391"/>
</dbReference>
<dbReference type="PDB" id="6KF3">
    <property type="method" value="EM"/>
    <property type="resolution" value="3.90 A"/>
    <property type="chains" value="C=1-391"/>
</dbReference>
<dbReference type="PDB" id="6KF4">
    <property type="method" value="EM"/>
    <property type="resolution" value="3.97 A"/>
    <property type="chains" value="C=1-391"/>
</dbReference>
<dbReference type="PDB" id="6KF9">
    <property type="method" value="EM"/>
    <property type="resolution" value="3.79 A"/>
    <property type="chains" value="C=1-391"/>
</dbReference>
<dbReference type="PDB" id="9BCT">
    <property type="method" value="EM"/>
    <property type="resolution" value="2.50 A"/>
    <property type="chains" value="C=1-391"/>
</dbReference>
<dbReference type="PDB" id="9BCU">
    <property type="method" value="EM"/>
    <property type="resolution" value="2.20 A"/>
    <property type="chains" value="C=1-391"/>
</dbReference>
<dbReference type="PDBsum" id="4QIW"/>
<dbReference type="PDBsum" id="6KF3"/>
<dbReference type="PDBsum" id="6KF4"/>
<dbReference type="PDBsum" id="6KF9"/>
<dbReference type="PDBsum" id="9BCT"/>
<dbReference type="PDBsum" id="9BCU"/>
<dbReference type="EMDB" id="EMD-44438"/>
<dbReference type="EMDB" id="EMD-44439"/>
<dbReference type="SMR" id="Q5JE34"/>
<dbReference type="STRING" id="69014.TK1081"/>
<dbReference type="EnsemblBacteria" id="BAD85270">
    <property type="protein sequence ID" value="BAD85270"/>
    <property type="gene ID" value="TK1081"/>
</dbReference>
<dbReference type="GeneID" id="78447594"/>
<dbReference type="KEGG" id="tko:TK1081"/>
<dbReference type="PATRIC" id="fig|69014.16.peg.1057"/>
<dbReference type="eggNOG" id="arCOG04256">
    <property type="taxonomic scope" value="Archaea"/>
</dbReference>
<dbReference type="HOGENOM" id="CLU_037097_1_0_2"/>
<dbReference type="InParanoid" id="Q5JE34"/>
<dbReference type="OrthoDB" id="372142at2157"/>
<dbReference type="PhylomeDB" id="Q5JE34"/>
<dbReference type="Proteomes" id="UP000000536">
    <property type="component" value="Chromosome"/>
</dbReference>
<dbReference type="GO" id="GO:0005694">
    <property type="term" value="C:chromosome"/>
    <property type="evidence" value="ECO:0007669"/>
    <property type="project" value="UniProtKB-SubCell"/>
</dbReference>
<dbReference type="GO" id="GO:0005737">
    <property type="term" value="C:cytoplasm"/>
    <property type="evidence" value="ECO:0007669"/>
    <property type="project" value="UniProtKB-SubCell"/>
</dbReference>
<dbReference type="GO" id="GO:0000428">
    <property type="term" value="C:DNA-directed RNA polymerase complex"/>
    <property type="evidence" value="ECO:0007669"/>
    <property type="project" value="UniProtKB-KW"/>
</dbReference>
<dbReference type="GO" id="GO:0003677">
    <property type="term" value="F:DNA binding"/>
    <property type="evidence" value="ECO:0007669"/>
    <property type="project" value="UniProtKB-UniRule"/>
</dbReference>
<dbReference type="GO" id="GO:0003899">
    <property type="term" value="F:DNA-directed RNA polymerase activity"/>
    <property type="evidence" value="ECO:0007669"/>
    <property type="project" value="UniProtKB-UniRule"/>
</dbReference>
<dbReference type="GO" id="GO:0006351">
    <property type="term" value="P:DNA-templated transcription"/>
    <property type="evidence" value="ECO:0007669"/>
    <property type="project" value="UniProtKB-UniRule"/>
</dbReference>
<dbReference type="CDD" id="cd06528">
    <property type="entry name" value="RNAP_A"/>
    <property type="match status" value="1"/>
</dbReference>
<dbReference type="Gene3D" id="1.10.150.390">
    <property type="match status" value="1"/>
</dbReference>
<dbReference type="HAMAP" id="MF_00411">
    <property type="entry name" value="RNApol_arch_Rpo1C"/>
    <property type="match status" value="1"/>
</dbReference>
<dbReference type="InterPro" id="IPR045867">
    <property type="entry name" value="DNA-dir_RpoC_beta_prime"/>
</dbReference>
<dbReference type="InterPro" id="IPR007081">
    <property type="entry name" value="RNA_pol_Rpb1_5"/>
</dbReference>
<dbReference type="InterPro" id="IPR012757">
    <property type="entry name" value="RPO1C"/>
</dbReference>
<dbReference type="NCBIfam" id="TIGR02389">
    <property type="entry name" value="RNA_pol_rpoA2"/>
    <property type="match status" value="1"/>
</dbReference>
<dbReference type="PANTHER" id="PTHR19376">
    <property type="entry name" value="DNA-DIRECTED RNA POLYMERASE"/>
    <property type="match status" value="1"/>
</dbReference>
<dbReference type="PANTHER" id="PTHR19376:SF32">
    <property type="entry name" value="DNA-DIRECTED RNA POLYMERASE III SUBUNIT RPC1"/>
    <property type="match status" value="1"/>
</dbReference>
<dbReference type="Pfam" id="PF04998">
    <property type="entry name" value="RNA_pol_Rpb1_5"/>
    <property type="match status" value="1"/>
</dbReference>
<dbReference type="SUPFAM" id="SSF64484">
    <property type="entry name" value="beta and beta-prime subunits of DNA dependent RNA-polymerase"/>
    <property type="match status" value="1"/>
</dbReference>